<name>MYBPP_MOUSE</name>
<keyword id="KW-0025">Alternative splicing</keyword>
<keyword id="KW-0963">Cytoplasm</keyword>
<keyword id="KW-0217">Developmental protein</keyword>
<keyword id="KW-0221">Differentiation</keyword>
<keyword id="KW-0472">Membrane</keyword>
<keyword id="KW-0597">Phosphoprotein</keyword>
<keyword id="KW-1185">Reference proteome</keyword>
<keyword id="KW-0744">Spermatogenesis</keyword>
<dbReference type="EMBL" id="AL645809">
    <property type="status" value="NOT_ANNOTATED_CDS"/>
    <property type="molecule type" value="Genomic_DNA"/>
</dbReference>
<dbReference type="EMBL" id="BC027327">
    <property type="protein sequence ID" value="AAH27327.1"/>
    <property type="status" value="ALT_INIT"/>
    <property type="molecule type" value="mRNA"/>
</dbReference>
<dbReference type="EMBL" id="BC050808">
    <property type="protein sequence ID" value="AAH50808.1"/>
    <property type="molecule type" value="mRNA"/>
</dbReference>
<dbReference type="RefSeq" id="NP_733771.2">
    <property type="nucleotide sequence ID" value="NM_170671.2"/>
</dbReference>
<dbReference type="BioGRID" id="222661">
    <property type="interactions" value="1"/>
</dbReference>
<dbReference type="FunCoup" id="Q5SUV2">
    <property type="interactions" value="162"/>
</dbReference>
<dbReference type="STRING" id="10090.ENSMUSP00000091477"/>
<dbReference type="GlyGen" id="Q5SUV2">
    <property type="glycosylation" value="1 site"/>
</dbReference>
<dbReference type="iPTMnet" id="Q5SUV2"/>
<dbReference type="PhosphoSitePlus" id="Q5SUV2"/>
<dbReference type="PaxDb" id="10090-ENSMUSP00000091477"/>
<dbReference type="ProteomicsDB" id="252626">
    <molecule id="Q5SUV2-1"/>
</dbReference>
<dbReference type="ProteomicsDB" id="252627">
    <molecule id="Q5SUV2-2"/>
</dbReference>
<dbReference type="Antibodypedia" id="45319">
    <property type="antibodies" value="46 antibodies from 13 providers"/>
</dbReference>
<dbReference type="DNASU" id="104601"/>
<dbReference type="Ensembl" id="ENSMUST00000040692.9">
    <molecule id="Q5SUV2-2"/>
    <property type="protein sequence ID" value="ENSMUSP00000047579.9"/>
    <property type="gene ID" value="ENSMUSG00000039110.16"/>
</dbReference>
<dbReference type="Ensembl" id="ENSMUST00000093945.10">
    <molecule id="Q5SUV2-1"/>
    <property type="protein sequence ID" value="ENSMUSP00000091477.4"/>
    <property type="gene ID" value="ENSMUSG00000039110.16"/>
</dbReference>
<dbReference type="GeneID" id="104601"/>
<dbReference type="KEGG" id="mmu:104601"/>
<dbReference type="UCSC" id="uc007kyw.2">
    <molecule id="Q5SUV2-2"/>
    <property type="organism name" value="mouse"/>
</dbReference>
<dbReference type="UCSC" id="uc007kyx.2">
    <molecule id="Q5SUV2-1"/>
    <property type="organism name" value="mouse"/>
</dbReference>
<dbReference type="AGR" id="MGI:2388726"/>
<dbReference type="CTD" id="84073"/>
<dbReference type="MGI" id="MGI:2388726">
    <property type="gene designation" value="Mycbpap"/>
</dbReference>
<dbReference type="VEuPathDB" id="HostDB:ENSMUSG00000039110"/>
<dbReference type="eggNOG" id="ENOG502QT8X">
    <property type="taxonomic scope" value="Eukaryota"/>
</dbReference>
<dbReference type="GeneTree" id="ENSGT00640000091565"/>
<dbReference type="HOGENOM" id="CLU_014509_0_0_1"/>
<dbReference type="InParanoid" id="Q5SUV2"/>
<dbReference type="PhylomeDB" id="Q5SUV2"/>
<dbReference type="TreeFam" id="TF329788"/>
<dbReference type="BioGRID-ORCS" id="104601">
    <property type="hits" value="6 hits in 77 CRISPR screens"/>
</dbReference>
<dbReference type="PRO" id="PR:Q5SUV2"/>
<dbReference type="Proteomes" id="UP000000589">
    <property type="component" value="Chromosome 11"/>
</dbReference>
<dbReference type="RNAct" id="Q5SUV2">
    <property type="molecule type" value="protein"/>
</dbReference>
<dbReference type="Bgee" id="ENSMUSG00000039110">
    <property type="expression patterns" value="Expressed in spermatid and 152 other cell types or tissues"/>
</dbReference>
<dbReference type="ExpressionAtlas" id="Q5SUV2">
    <property type="expression patterns" value="baseline and differential"/>
</dbReference>
<dbReference type="GO" id="GO:0005737">
    <property type="term" value="C:cytoplasm"/>
    <property type="evidence" value="ECO:0000250"/>
    <property type="project" value="UniProtKB"/>
</dbReference>
<dbReference type="GO" id="GO:0016020">
    <property type="term" value="C:membrane"/>
    <property type="evidence" value="ECO:0007669"/>
    <property type="project" value="UniProtKB-SubCell"/>
</dbReference>
<dbReference type="GO" id="GO:0045202">
    <property type="term" value="C:synapse"/>
    <property type="evidence" value="ECO:0007669"/>
    <property type="project" value="GOC"/>
</dbReference>
<dbReference type="GO" id="GO:0030154">
    <property type="term" value="P:cell differentiation"/>
    <property type="evidence" value="ECO:0007669"/>
    <property type="project" value="UniProtKB-KW"/>
</dbReference>
<dbReference type="GO" id="GO:0007268">
    <property type="term" value="P:chemical synaptic transmission"/>
    <property type="evidence" value="ECO:0000250"/>
    <property type="project" value="UniProtKB"/>
</dbReference>
<dbReference type="GO" id="GO:0007283">
    <property type="term" value="P:spermatogenesis"/>
    <property type="evidence" value="ECO:0000250"/>
    <property type="project" value="UniProtKB"/>
</dbReference>
<dbReference type="Gene3D" id="2.60.40.10">
    <property type="entry name" value="Immunoglobulins"/>
    <property type="match status" value="1"/>
</dbReference>
<dbReference type="InterPro" id="IPR013783">
    <property type="entry name" value="Ig-like_fold"/>
</dbReference>
<dbReference type="InterPro" id="IPR032707">
    <property type="entry name" value="MYCBPAP"/>
</dbReference>
<dbReference type="PANTHER" id="PTHR48421">
    <property type="entry name" value="MYCBP-ASSOCIATED PROTEIN"/>
    <property type="match status" value="1"/>
</dbReference>
<dbReference type="PANTHER" id="PTHR48421:SF1">
    <property type="entry name" value="MYCBP-ASSOCIATED PROTEIN"/>
    <property type="match status" value="1"/>
</dbReference>
<dbReference type="Pfam" id="PF14646">
    <property type="entry name" value="MYCBPAP"/>
    <property type="match status" value="1"/>
</dbReference>
<sequence length="932" mass="106452">MMKKITERQSPLKLLEKKRAKAPEQPTPPIQEEPEPVSNVLQGDDILALAIKKEDLRKQHVPQFEETGEKPVVTQKFIIRKLKPKDSSKRVYHLVAHPATPDAATKPLDYSGPHDSFLSSGQILPHQILGSLQDFKRIAVARGNTQLAKLIHIQPCLMTLISAKEEPKPKPPKEEERPSPWAPPPQHNFLKNWRRHIALRKKQQEALSKHLKKPASELLMHTGESYRKIQEEREVIDRALPTQHDGKATSWFWSPLEYLGDEMTGLLMTKKKTQRGLVEPITHIRKPLSIQVETGLPAQKDAWYRYTWDRSLFLIYRRKELQSIMAELDFSQQDIDGLEVVGHGKPFSSVTVEEHLPPEKIQKSSSEDTVFLDSLTNLSDMVPMPILGPSLLFCGKPACWVRGSNPEDKKNIGIGVRLTFETLEGERTSSELTVVNNGTVAIWYNWRRRPHQDFFQDLKQNKTQRFYFNNREGVILPGETKHFTFFFKSLNAGIFRESWEFGTHPTLLGGAVLQVTLHAISLTQDIFMDERKLLETKLAAHEAITIAQSVLQDLLRGISTPERTPSPVDAYLTEEDLFNYRNPRLHYQHQVVQNLHQLWQQYRKAKATQKETPSLRTPVPLLLVEKASGSISPRNLVSEYSQLSPHQEMDTARKTRDFFLSLKSSIGKKSVARKSIMEELLVEEGPDRETTQRPWALKSISPPKWNLCLEDFRQAVMTFPEELQREDALIQLNKAAMELCQEQKPLQSDLLYQMCLQLWRDVIDSLVSQSLWLRNLLGLPEKETVYLDLPDEQGQKSPPVTESKVTSGKAGKEDRRGGAQEKKQLGTKDKDDKRGSKTPGKEDRPNSKKLKPKDDKKVVKSASRDRLLSEDPPPDSTAPSQEPIDPLVMEKYTQRLHAEVYALLDNLVTDVMVLADELSSTKNVEESLRFCS</sequence>
<comment type="function">
    <text evidence="1 2">May play a role in spermatogenesis. May be involved in synaptic processes (By similarity).</text>
</comment>
<comment type="subunit">
    <text evidence="2">Interacts with MYCBP.</text>
</comment>
<comment type="subcellular location">
    <subcellularLocation>
        <location evidence="1 2">Cytoplasm</location>
    </subcellularLocation>
    <subcellularLocation>
        <location evidence="1 2">Membrane</location>
    </subcellularLocation>
    <text evidence="1 2">Colocalizes with MYCBP in the cytoplasm.</text>
</comment>
<comment type="alternative products">
    <event type="alternative splicing"/>
    <isoform>
        <id>Q5SUV2-1</id>
        <name evidence="5">1</name>
        <sequence type="displayed"/>
    </isoform>
    <isoform>
        <id>Q5SUV2-2</id>
        <name evidence="5">2</name>
        <sequence type="described" ref="VSP_052544 VSP_052545"/>
    </isoform>
</comment>
<comment type="developmental stage">
    <text evidence="4">In testis, weakly expressed in 3-week old mice and strongly expressed after expression of spermatids, especially after 10 weeks of age, during which time MYCBP/AMY-1 is also expressed.</text>
</comment>
<comment type="sequence caution" evidence="7">
    <conflict type="erroneous initiation">
        <sequence resource="EMBL-CDS" id="AAH27327"/>
    </conflict>
</comment>
<gene>
    <name evidence="10" type="primary">Mycbpap</name>
    <name type="synonym">Amap1</name>
</gene>
<proteinExistence type="evidence at protein level"/>
<organism>
    <name type="scientific">Mus musculus</name>
    <name type="common">Mouse</name>
    <dbReference type="NCBI Taxonomy" id="10090"/>
    <lineage>
        <taxon>Eukaryota</taxon>
        <taxon>Metazoa</taxon>
        <taxon>Chordata</taxon>
        <taxon>Craniata</taxon>
        <taxon>Vertebrata</taxon>
        <taxon>Euteleostomi</taxon>
        <taxon>Mammalia</taxon>
        <taxon>Eutheria</taxon>
        <taxon>Euarchontoglires</taxon>
        <taxon>Glires</taxon>
        <taxon>Rodentia</taxon>
        <taxon>Myomorpha</taxon>
        <taxon>Muroidea</taxon>
        <taxon>Muridae</taxon>
        <taxon>Murinae</taxon>
        <taxon>Mus</taxon>
        <taxon>Mus</taxon>
    </lineage>
</organism>
<accession>Q5SUV2</accession>
<accession>Q80YS8</accession>
<accession>Q8R2Q9</accession>
<feature type="chain" id="PRO_0000302878" description="MYCBP-associated protein">
    <location>
        <begin position="1"/>
        <end position="932"/>
    </location>
</feature>
<feature type="region of interest" description="Disordered" evidence="3">
    <location>
        <begin position="1"/>
        <end position="39"/>
    </location>
</feature>
<feature type="region of interest" description="Disordered" evidence="3">
    <location>
        <begin position="165"/>
        <end position="187"/>
    </location>
</feature>
<feature type="region of interest" description="Disordered" evidence="3">
    <location>
        <begin position="789"/>
        <end position="886"/>
    </location>
</feature>
<feature type="compositionally biased region" description="Basic and acidic residues" evidence="3">
    <location>
        <begin position="165"/>
        <end position="178"/>
    </location>
</feature>
<feature type="compositionally biased region" description="Polar residues" evidence="3">
    <location>
        <begin position="795"/>
        <end position="806"/>
    </location>
</feature>
<feature type="compositionally biased region" description="Basic and acidic residues" evidence="3">
    <location>
        <begin position="810"/>
        <end position="869"/>
    </location>
</feature>
<feature type="modified residue" description="Phosphoserine" evidence="11">
    <location>
        <position position="559"/>
    </location>
</feature>
<feature type="modified residue" description="Phosphothreonine" evidence="1">
    <location>
        <position position="560"/>
    </location>
</feature>
<feature type="modified residue" description="Phosphoserine" evidence="1">
    <location>
        <position position="566"/>
    </location>
</feature>
<feature type="splice variant" id="VSP_052544" description="In isoform 2." evidence="6">
    <location>
        <begin position="1"/>
        <end position="518"/>
    </location>
</feature>
<feature type="splice variant" id="VSP_052545" description="In isoform 2." evidence="6">
    <original>AISLTQDIFMDERKLL</original>
    <variation>MTSLTTLHHKQLPGEC</variation>
    <location>
        <begin position="519"/>
        <end position="534"/>
    </location>
</feature>
<feature type="sequence conflict" description="In Ref. 2; AAH27327." evidence="7" ref="2">
    <original>I</original>
    <variation>V</variation>
    <location>
        <position position="700"/>
    </location>
</feature>
<protein>
    <recommendedName>
        <fullName>MYCBP-associated protein</fullName>
    </recommendedName>
    <alternativeName>
        <fullName>AMAM-1</fullName>
    </alternativeName>
    <alternativeName>
        <fullName>AMY-1-binding protein 1</fullName>
        <shortName>AMAP-1</shortName>
    </alternativeName>
</protein>
<reference key="1">
    <citation type="journal article" date="2009" name="PLoS Biol.">
        <title>Lineage-specific biology revealed by a finished genome assembly of the mouse.</title>
        <authorList>
            <person name="Church D.M."/>
            <person name="Goodstadt L."/>
            <person name="Hillier L.W."/>
            <person name="Zody M.C."/>
            <person name="Goldstein S."/>
            <person name="She X."/>
            <person name="Bult C.J."/>
            <person name="Agarwala R."/>
            <person name="Cherry J.L."/>
            <person name="DiCuccio M."/>
            <person name="Hlavina W."/>
            <person name="Kapustin Y."/>
            <person name="Meric P."/>
            <person name="Maglott D."/>
            <person name="Birtle Z."/>
            <person name="Marques A.C."/>
            <person name="Graves T."/>
            <person name="Zhou S."/>
            <person name="Teague B."/>
            <person name="Potamousis K."/>
            <person name="Churas C."/>
            <person name="Place M."/>
            <person name="Herschleb J."/>
            <person name="Runnheim R."/>
            <person name="Forrest D."/>
            <person name="Amos-Landgraf J."/>
            <person name="Schwartz D.C."/>
            <person name="Cheng Z."/>
            <person name="Lindblad-Toh K."/>
            <person name="Eichler E.E."/>
            <person name="Ponting C.P."/>
        </authorList>
    </citation>
    <scope>NUCLEOTIDE SEQUENCE [LARGE SCALE GENOMIC DNA]</scope>
    <source>
        <strain>C57BL/6J</strain>
    </source>
</reference>
<reference evidence="7 9" key="2">
    <citation type="journal article" date="2004" name="Genome Res.">
        <title>The status, quality, and expansion of the NIH full-length cDNA project: the Mammalian Gene Collection (MGC).</title>
        <authorList>
            <consortium name="The MGC Project Team"/>
        </authorList>
    </citation>
    <scope>NUCLEOTIDE SEQUENCE [LARGE SCALE MRNA] (ISOFORM 2)</scope>
    <scope>NUCLEOTIDE SEQUENCE [LARGE SCALE MRNA] OF 195-932 (ISOFORM 1)</scope>
    <source>
        <strain evidence="8">Czech II</strain>
        <tissue evidence="8">Mammary tumor</tissue>
        <tissue evidence="9">Testis</tissue>
    </source>
</reference>
<reference evidence="7" key="3">
    <citation type="journal article" date="2002" name="Biochim. Biophys. Acta">
        <title>AMAP-1, a novel testis-specific AMY-1-binding protein, is differentially expressed during the course of spermatogenesis.</title>
        <authorList>
            <person name="Yukitake H."/>
            <person name="Furusawa M."/>
            <person name="Taira T."/>
            <person name="Iguchi-Ariga S.M.M."/>
            <person name="Ariga H."/>
        </authorList>
    </citation>
    <scope>DEVELOPMENTAL STAGE</scope>
</reference>
<reference key="4">
    <citation type="journal article" date="2010" name="Cell">
        <title>A tissue-specific atlas of mouse protein phosphorylation and expression.</title>
        <authorList>
            <person name="Huttlin E.L."/>
            <person name="Jedrychowski M.P."/>
            <person name="Elias J.E."/>
            <person name="Goswami T."/>
            <person name="Rad R."/>
            <person name="Beausoleil S.A."/>
            <person name="Villen J."/>
            <person name="Haas W."/>
            <person name="Sowa M.E."/>
            <person name="Gygi S.P."/>
        </authorList>
    </citation>
    <scope>PHOSPHORYLATION [LARGE SCALE ANALYSIS] AT SER-559</scope>
    <scope>IDENTIFICATION BY MASS SPECTROMETRY [LARGE SCALE ANALYSIS]</scope>
    <source>
        <tissue>Testis</tissue>
    </source>
</reference>
<evidence type="ECO:0000250" key="1">
    <source>
        <dbReference type="UniProtKB" id="Q69CM7"/>
    </source>
</evidence>
<evidence type="ECO:0000250" key="2">
    <source>
        <dbReference type="UniProtKB" id="Q8TBZ2"/>
    </source>
</evidence>
<evidence type="ECO:0000256" key="3">
    <source>
        <dbReference type="SAM" id="MobiDB-lite"/>
    </source>
</evidence>
<evidence type="ECO:0000269" key="4">
    <source>
    </source>
</evidence>
<evidence type="ECO:0000269" key="5">
    <source>
    </source>
</evidence>
<evidence type="ECO:0000303" key="6">
    <source>
    </source>
</evidence>
<evidence type="ECO:0000305" key="7"/>
<evidence type="ECO:0000312" key="8">
    <source>
        <dbReference type="EMBL" id="AAH27327.1"/>
    </source>
</evidence>
<evidence type="ECO:0000312" key="9">
    <source>
        <dbReference type="EMBL" id="AAH50808.1"/>
    </source>
</evidence>
<evidence type="ECO:0000312" key="10">
    <source>
        <dbReference type="MGI" id="MGI:2388726"/>
    </source>
</evidence>
<evidence type="ECO:0007744" key="11">
    <source>
    </source>
</evidence>